<organism>
    <name type="scientific">Heloderma horridum horridum</name>
    <name type="common">Mexican beaded lizard</name>
    <dbReference type="NCBI Taxonomy" id="8552"/>
    <lineage>
        <taxon>Eukaryota</taxon>
        <taxon>Metazoa</taxon>
        <taxon>Chordata</taxon>
        <taxon>Craniata</taxon>
        <taxon>Vertebrata</taxon>
        <taxon>Euteleostomi</taxon>
        <taxon>Lepidosauria</taxon>
        <taxon>Squamata</taxon>
        <taxon>Bifurcata</taxon>
        <taxon>Unidentata</taxon>
        <taxon>Episquamata</taxon>
        <taxon>Toxicofera</taxon>
        <taxon>Anguimorpha</taxon>
        <taxon>Neoanguimorpha</taxon>
        <taxon>Helodermatidae</taxon>
        <taxon>Heloderma</taxon>
    </lineage>
</organism>
<evidence type="ECO:0000255" key="1"/>
<evidence type="ECO:0000269" key="2">
    <source>
    </source>
</evidence>
<evidence type="ECO:0000269" key="3">
    <source>
    </source>
</evidence>
<evidence type="ECO:0000269" key="4">
    <source>
    </source>
</evidence>
<evidence type="ECO:0000269" key="5">
    <source>
    </source>
</evidence>
<evidence type="ECO:0000269" key="6">
    <source>
    </source>
</evidence>
<evidence type="ECO:0000305" key="7"/>
<evidence type="ECO:0000305" key="8">
    <source>
    </source>
</evidence>
<evidence type="ECO:0000305" key="9">
    <source>
    </source>
</evidence>
<feature type="signal peptide" evidence="1">
    <location>
        <begin position="1"/>
        <end position="21"/>
    </location>
</feature>
<feature type="propeptide" id="PRO_0000271136">
    <location>
        <begin position="22"/>
        <end position="45"/>
    </location>
</feature>
<feature type="peptide" id="PRO_0000044748" description="Exendin-3">
    <location>
        <begin position="48"/>
        <end position="86"/>
    </location>
</feature>
<feature type="modified residue" description="Serine amide" evidence="3">
    <location>
        <position position="86"/>
    </location>
</feature>
<comment type="function">
    <text evidence="4 5">Stimulates vasoactive intestinal peptide (VIP) receptors in high concentrations (&gt;100 nM), resulting in both an increase in cAMP and amylase secretion from pancreatic acini, although at low concentrations (between 0.3 and 3 nM) it increases cAMP without stimulating amylase release. Stimulates the GLP-1 receptor (GLP1R). Induces hypotension that is mediated by relaxation of cardiac smooth muscle.</text>
</comment>
<comment type="subcellular location">
    <subcellularLocation>
        <location evidence="2 3">Secreted</location>
    </subcellularLocation>
</comment>
<comment type="tissue specificity">
    <text evidence="8 9">Expressed by the venom gland.</text>
</comment>
<comment type="mass spectrometry" mass="4203.2" method="MALDI" evidence="2"/>
<comment type="biotechnology">
    <text evidence="6">[Lys(40)((68)Ga-DOTA)]exendin-3 is a promising tracer to visualize insulinomas (neuroendocrine tumors derived from pancreatic beta-cells in which GLP1R is expressed at &gt;90%) with PET imaging.</text>
</comment>
<comment type="similarity">
    <text evidence="7">Belongs to the glucagon family.</text>
</comment>
<dbReference type="EMBL" id="AJ580309">
    <property type="protein sequence ID" value="CAE30483.1"/>
    <property type="molecule type" value="mRNA"/>
</dbReference>
<dbReference type="PIR" id="A23674">
    <property type="entry name" value="HWGH3Z"/>
</dbReference>
<dbReference type="SMR" id="P20394"/>
<dbReference type="GO" id="GO:0005576">
    <property type="term" value="C:extracellular region"/>
    <property type="evidence" value="ECO:0007669"/>
    <property type="project" value="UniProtKB-SubCell"/>
</dbReference>
<dbReference type="GO" id="GO:0005179">
    <property type="term" value="F:hormone activity"/>
    <property type="evidence" value="ECO:0007669"/>
    <property type="project" value="InterPro"/>
</dbReference>
<dbReference type="GO" id="GO:0090729">
    <property type="term" value="F:toxin activity"/>
    <property type="evidence" value="ECO:0007669"/>
    <property type="project" value="UniProtKB-KW"/>
</dbReference>
<dbReference type="GO" id="GO:0008217">
    <property type="term" value="P:regulation of blood pressure"/>
    <property type="evidence" value="ECO:0007669"/>
    <property type="project" value="UniProtKB-KW"/>
</dbReference>
<dbReference type="Gene3D" id="6.10.250.590">
    <property type="match status" value="1"/>
</dbReference>
<dbReference type="InterPro" id="IPR000532">
    <property type="entry name" value="Glucagon_GIP_secretin_VIP"/>
</dbReference>
<dbReference type="Pfam" id="PF00123">
    <property type="entry name" value="Hormone_2"/>
    <property type="match status" value="1"/>
</dbReference>
<dbReference type="SMART" id="SM00070">
    <property type="entry name" value="GLUCA"/>
    <property type="match status" value="1"/>
</dbReference>
<dbReference type="PROSITE" id="PS00260">
    <property type="entry name" value="GLUCAGON"/>
    <property type="match status" value="1"/>
</dbReference>
<proteinExistence type="evidence at protein level"/>
<name>EXE3_HELHO</name>
<reference key="1">
    <citation type="journal article" date="2006" name="Toxicon">
        <title>Isolation and cloning of exendin precursor cDNAs from single samples of venom from the Mexican beaded lizard (Heloderma horridum) and the Gila monster (Heloderma suspectum).</title>
        <authorList>
            <person name="Chen T."/>
            <person name="Kwok H."/>
            <person name="Ivanyi C."/>
            <person name="Shaw C."/>
        </authorList>
    </citation>
    <scope>NUCLEOTIDE SEQUENCE [MRNA]</scope>
    <scope>PROTEIN SEQUENCE OF 48-86</scope>
    <scope>MASS SPECTROMETRY</scope>
    <scope>SUBCELLULAR LOCATION</scope>
    <source>
        <tissue>Venom</tissue>
        <tissue>Venom gland</tissue>
    </source>
</reference>
<reference key="2">
    <citation type="journal article" date="1990" name="J. Biol. Chem.">
        <title>Purification and structure of exendin-3, a new pancreatic secretagogue isolated from Heloderma horridum venom.</title>
        <authorList>
            <person name="Eng J."/>
            <person name="Andrew P.C."/>
            <person name="Kleinman W.A."/>
            <person name="Singh L."/>
            <person name="Raufman J.-P."/>
        </authorList>
    </citation>
    <scope>PROTEIN SEQUENCE OF 48-86</scope>
    <scope>AMIDATION AT SER-86</scope>
    <scope>SUBCELLULAR LOCATION</scope>
    <source>
        <tissue>Venom</tissue>
    </source>
</reference>
<reference key="3">
    <citation type="journal article" date="1991" name="J. Biol. Chem.">
        <title>Exendin-3, a novel peptide from Heloderma horridum venom, interacts with vasoactive intestinal peptide receptors and a newly described receptor on dispersed acini from guinea pig pancreas. Description of exendin-3(9-39) amide, a specific exendin receptor antagonist.</title>
        <authorList>
            <person name="Raufman J.P."/>
            <person name="Singh L."/>
            <person name="Eng J."/>
        </authorList>
    </citation>
    <scope>FUNCTION</scope>
</reference>
<reference key="4">
    <citation type="journal article" date="2010" name="Mol. Biol. Evol.">
        <title>Novel venom proteins produced by differential domain-expression strategies in beaded lizards and gila monsters (genus Heloderma).</title>
        <authorList>
            <person name="Fry B.G."/>
            <person name="Roelants K."/>
            <person name="Winter K."/>
            <person name="Hodgson W.C."/>
            <person name="Griesman L."/>
            <person name="Kwok H.F."/>
            <person name="Scanlon D."/>
            <person name="Karas J."/>
            <person name="Shaw C."/>
            <person name="Wong L."/>
            <person name="Norman J.A."/>
        </authorList>
    </citation>
    <scope>SYNTHESIS OF 48-86</scope>
    <scope>FUNCTION</scope>
</reference>
<reference key="5">
    <citation type="journal article" date="2010" name="Eur. J. Nucl. Med. Mol. Imaging">
        <title>68Ga-labelled exendin-3, a new agent for the detection of insulinomas with PET.</title>
        <authorList>
            <person name="Brom M."/>
            <person name="Oyen W.J."/>
            <person name="Joosten L."/>
            <person name="Gotthardt M."/>
            <person name="Boerman O.C."/>
        </authorList>
    </citation>
    <scope>BIOTECHNOLOGY</scope>
</reference>
<keyword id="KW-0027">Amidation</keyword>
<keyword id="KW-0165">Cleavage on pair of basic residues</keyword>
<keyword id="KW-0903">Direct protein sequencing</keyword>
<keyword id="KW-1213">G-protein coupled receptor impairing toxin</keyword>
<keyword id="KW-0382">Hypotensive agent</keyword>
<keyword id="KW-0964">Secreted</keyword>
<keyword id="KW-0732">Signal</keyword>
<keyword id="KW-0800">Toxin</keyword>
<protein>
    <recommendedName>
        <fullName>Exendin-3</fullName>
    </recommendedName>
    <alternativeName>
        <fullName>Glucagon-like 3</fullName>
    </alternativeName>
</protein>
<accession>P20394</accession>
<accession>Q7SZU6</accession>
<sequence length="87" mass="9481">MKIILWLCVFGLFLATLFPVSWQMPVESGLSSEDSASSESFASKIKRHSDGTFTSDLSKQMEEEAVRLFIEWLKNGGPSSGAPPPSG</sequence>